<gene>
    <name evidence="1" type="primary">ilvD</name>
    <name type="ordered locus">BOV_0097</name>
</gene>
<name>ILVD_BRUO2</name>
<comment type="function">
    <text evidence="1">Functions in the biosynthesis of branched-chain amino acids. Catalyzes the dehydration of (2R,3R)-2,3-dihydroxy-3-methylpentanoate (2,3-dihydroxy-3-methylvalerate) into 2-oxo-3-methylpentanoate (2-oxo-3-methylvalerate) and of (2R)-2,3-dihydroxy-3-methylbutanoate (2,3-dihydroxyisovalerate) into 2-oxo-3-methylbutanoate (2-oxoisovalerate), the penultimate precursor to L-isoleucine and L-valine, respectively.</text>
</comment>
<comment type="catalytic activity">
    <reaction evidence="1">
        <text>(2R)-2,3-dihydroxy-3-methylbutanoate = 3-methyl-2-oxobutanoate + H2O</text>
        <dbReference type="Rhea" id="RHEA:24809"/>
        <dbReference type="ChEBI" id="CHEBI:11851"/>
        <dbReference type="ChEBI" id="CHEBI:15377"/>
        <dbReference type="ChEBI" id="CHEBI:49072"/>
        <dbReference type="EC" id="4.2.1.9"/>
    </reaction>
    <physiologicalReaction direction="left-to-right" evidence="1">
        <dbReference type="Rhea" id="RHEA:24810"/>
    </physiologicalReaction>
</comment>
<comment type="catalytic activity">
    <reaction evidence="1">
        <text>(2R,3R)-2,3-dihydroxy-3-methylpentanoate = (S)-3-methyl-2-oxopentanoate + H2O</text>
        <dbReference type="Rhea" id="RHEA:27694"/>
        <dbReference type="ChEBI" id="CHEBI:15377"/>
        <dbReference type="ChEBI" id="CHEBI:35146"/>
        <dbReference type="ChEBI" id="CHEBI:49258"/>
        <dbReference type="EC" id="4.2.1.9"/>
    </reaction>
    <physiologicalReaction direction="left-to-right" evidence="1">
        <dbReference type="Rhea" id="RHEA:27695"/>
    </physiologicalReaction>
</comment>
<comment type="cofactor">
    <cofactor evidence="1">
        <name>[2Fe-2S] cluster</name>
        <dbReference type="ChEBI" id="CHEBI:190135"/>
    </cofactor>
    <text evidence="1">Binds 1 [2Fe-2S] cluster per subunit. This cluster acts as a Lewis acid cofactor.</text>
</comment>
<comment type="cofactor">
    <cofactor evidence="1">
        <name>Mg(2+)</name>
        <dbReference type="ChEBI" id="CHEBI:18420"/>
    </cofactor>
</comment>
<comment type="pathway">
    <text evidence="1">Amino-acid biosynthesis; L-isoleucine biosynthesis; L-isoleucine from 2-oxobutanoate: step 3/4.</text>
</comment>
<comment type="pathway">
    <text evidence="1">Amino-acid biosynthesis; L-valine biosynthesis; L-valine from pyruvate: step 3/4.</text>
</comment>
<comment type="subunit">
    <text evidence="1">Homodimer.</text>
</comment>
<comment type="similarity">
    <text evidence="1">Belongs to the IlvD/Edd family.</text>
</comment>
<comment type="sequence caution" evidence="2">
    <conflict type="erroneous initiation">
        <sequence resource="EMBL-CDS" id="ABQ61886"/>
    </conflict>
</comment>
<feature type="chain" id="PRO_0000321593" description="Dihydroxy-acid dehydratase">
    <location>
        <begin position="1"/>
        <end position="611"/>
    </location>
</feature>
<feature type="active site" description="Proton acceptor" evidence="1">
    <location>
        <position position="517"/>
    </location>
</feature>
<feature type="binding site" evidence="1">
    <location>
        <position position="81"/>
    </location>
    <ligand>
        <name>Mg(2+)</name>
        <dbReference type="ChEBI" id="CHEBI:18420"/>
    </ligand>
</feature>
<feature type="binding site" evidence="1">
    <location>
        <position position="122"/>
    </location>
    <ligand>
        <name>[2Fe-2S] cluster</name>
        <dbReference type="ChEBI" id="CHEBI:190135"/>
    </ligand>
</feature>
<feature type="binding site" evidence="1">
    <location>
        <position position="123"/>
    </location>
    <ligand>
        <name>Mg(2+)</name>
        <dbReference type="ChEBI" id="CHEBI:18420"/>
    </ligand>
</feature>
<feature type="binding site" description="via carbamate group" evidence="1">
    <location>
        <position position="124"/>
    </location>
    <ligand>
        <name>Mg(2+)</name>
        <dbReference type="ChEBI" id="CHEBI:18420"/>
    </ligand>
</feature>
<feature type="binding site" evidence="1">
    <location>
        <position position="195"/>
    </location>
    <ligand>
        <name>[2Fe-2S] cluster</name>
        <dbReference type="ChEBI" id="CHEBI:190135"/>
    </ligand>
</feature>
<feature type="binding site" evidence="1">
    <location>
        <position position="491"/>
    </location>
    <ligand>
        <name>Mg(2+)</name>
        <dbReference type="ChEBI" id="CHEBI:18420"/>
    </ligand>
</feature>
<feature type="modified residue" description="N6-carboxylysine" evidence="1">
    <location>
        <position position="124"/>
    </location>
</feature>
<keyword id="KW-0001">2Fe-2S</keyword>
<keyword id="KW-0028">Amino-acid biosynthesis</keyword>
<keyword id="KW-0100">Branched-chain amino acid biosynthesis</keyword>
<keyword id="KW-0408">Iron</keyword>
<keyword id="KW-0411">Iron-sulfur</keyword>
<keyword id="KW-0456">Lyase</keyword>
<keyword id="KW-0460">Magnesium</keyword>
<keyword id="KW-0479">Metal-binding</keyword>
<sequence length="611" mass="65310">MPPYRSRTTTHGRNMAGARGLWRATGMKDEDFGKPIIAVVNSFTQFVPGHVHLKDLGQLVAREIESAGGVAKEFNTIAVDDGIAMGHDGMLYSLPSRELIADSVEYMVNAHCADAMVCISNCDKITPGMLMAALRLNIPVVFVSGGPMEAGKVVWEDSVKKLDLVDAMVAAADDHYTDEQVKAIERSACPTCGSCSGMFTANSMNCLTEALGLSLPGNGSTLATHADRKRLFVEAGHLIVDLARRYYEQDDESVLPRSIATFSAFENAMTLDIAMGGSTNTVLHLLAAAQEAEIDFTMADIDRLSRRVPVLCKVAPAVSSVHMEDVHHAGGIMGILGQLDNAGLLTTSIPTVHSETLAKALDHWDVTRTNSEMVHKFYSAAPGGVPTQVAFSQERRFDKVDTDREKGVIRSKEHAFSQDGGLAVLYGNLAEDGCIVKTAGVDDSILKFSGPARIFESQDSAVLGILNGKIKPGDIVLIRYEGPRGGPGMQEMLYPTSYLKSKGLGKACALITDGRFSGGSSGLSIGHVSPEAAEGGTIGLVREGDIIDIDIPNRKIHLAVDDATLAERRAEQDAAGWKPAEERKRKISTALKAYAAMATSAARGAVRKLPD</sequence>
<protein>
    <recommendedName>
        <fullName evidence="1">Dihydroxy-acid dehydratase</fullName>
        <shortName evidence="1">DAD</shortName>
        <ecNumber evidence="1">4.2.1.9</ecNumber>
    </recommendedName>
</protein>
<organism>
    <name type="scientific">Brucella ovis (strain ATCC 25840 / 63/290 / NCTC 10512)</name>
    <dbReference type="NCBI Taxonomy" id="444178"/>
    <lineage>
        <taxon>Bacteria</taxon>
        <taxon>Pseudomonadati</taxon>
        <taxon>Pseudomonadota</taxon>
        <taxon>Alphaproteobacteria</taxon>
        <taxon>Hyphomicrobiales</taxon>
        <taxon>Brucellaceae</taxon>
        <taxon>Brucella/Ochrobactrum group</taxon>
        <taxon>Brucella</taxon>
    </lineage>
</organism>
<reference key="1">
    <citation type="journal article" date="2009" name="PLoS ONE">
        <title>Genome degradation in Brucella ovis corresponds with narrowing of its host range and tissue tropism.</title>
        <authorList>
            <person name="Tsolis R.M."/>
            <person name="Seshadri R."/>
            <person name="Santos R.L."/>
            <person name="Sangari F.J."/>
            <person name="Lobo J.M."/>
            <person name="de Jong M.F."/>
            <person name="Ren Q."/>
            <person name="Myers G."/>
            <person name="Brinkac L.M."/>
            <person name="Nelson W.C."/>
            <person name="Deboy R.T."/>
            <person name="Angiuoli S."/>
            <person name="Khouri H."/>
            <person name="Dimitrov G."/>
            <person name="Robinson J.R."/>
            <person name="Mulligan S."/>
            <person name="Walker R.L."/>
            <person name="Elzer P.E."/>
            <person name="Hassan K.A."/>
            <person name="Paulsen I.T."/>
        </authorList>
    </citation>
    <scope>NUCLEOTIDE SEQUENCE [LARGE SCALE GENOMIC DNA]</scope>
    <source>
        <strain>ATCC 25840 / 63/290 / NCTC 10512</strain>
    </source>
</reference>
<dbReference type="EC" id="4.2.1.9" evidence="1"/>
<dbReference type="EMBL" id="CP000708">
    <property type="protein sequence ID" value="ABQ61886.1"/>
    <property type="status" value="ALT_INIT"/>
    <property type="molecule type" value="Genomic_DNA"/>
</dbReference>
<dbReference type="RefSeq" id="WP_002965347.1">
    <property type="nucleotide sequence ID" value="NC_009505.1"/>
</dbReference>
<dbReference type="SMR" id="A5VN43"/>
<dbReference type="GeneID" id="93017425"/>
<dbReference type="KEGG" id="bov:BOV_0097"/>
<dbReference type="HOGENOM" id="CLU_014271_4_2_5"/>
<dbReference type="PhylomeDB" id="A5VN43"/>
<dbReference type="UniPathway" id="UPA00047">
    <property type="reaction ID" value="UER00057"/>
</dbReference>
<dbReference type="UniPathway" id="UPA00049">
    <property type="reaction ID" value="UER00061"/>
</dbReference>
<dbReference type="PRO" id="PR:A5VN43"/>
<dbReference type="Proteomes" id="UP000006383">
    <property type="component" value="Chromosome I"/>
</dbReference>
<dbReference type="GO" id="GO:0005829">
    <property type="term" value="C:cytosol"/>
    <property type="evidence" value="ECO:0007669"/>
    <property type="project" value="TreeGrafter"/>
</dbReference>
<dbReference type="GO" id="GO:0051537">
    <property type="term" value="F:2 iron, 2 sulfur cluster binding"/>
    <property type="evidence" value="ECO:0007669"/>
    <property type="project" value="UniProtKB-UniRule"/>
</dbReference>
<dbReference type="GO" id="GO:0004160">
    <property type="term" value="F:dihydroxy-acid dehydratase activity"/>
    <property type="evidence" value="ECO:0007669"/>
    <property type="project" value="UniProtKB-UniRule"/>
</dbReference>
<dbReference type="GO" id="GO:0000287">
    <property type="term" value="F:magnesium ion binding"/>
    <property type="evidence" value="ECO:0007669"/>
    <property type="project" value="UniProtKB-UniRule"/>
</dbReference>
<dbReference type="GO" id="GO:0009097">
    <property type="term" value="P:isoleucine biosynthetic process"/>
    <property type="evidence" value="ECO:0007669"/>
    <property type="project" value="UniProtKB-UniRule"/>
</dbReference>
<dbReference type="GO" id="GO:0009099">
    <property type="term" value="P:L-valine biosynthetic process"/>
    <property type="evidence" value="ECO:0007669"/>
    <property type="project" value="UniProtKB-UniRule"/>
</dbReference>
<dbReference type="FunFam" id="3.50.30.80:FF:000001">
    <property type="entry name" value="Dihydroxy-acid dehydratase"/>
    <property type="match status" value="1"/>
</dbReference>
<dbReference type="Gene3D" id="3.50.30.80">
    <property type="entry name" value="IlvD/EDD C-terminal domain-like"/>
    <property type="match status" value="1"/>
</dbReference>
<dbReference type="HAMAP" id="MF_00012">
    <property type="entry name" value="IlvD"/>
    <property type="match status" value="1"/>
</dbReference>
<dbReference type="InterPro" id="IPR042096">
    <property type="entry name" value="Dihydro-acid_dehy_C"/>
</dbReference>
<dbReference type="InterPro" id="IPR004404">
    <property type="entry name" value="DihydroxyA_deHydtase"/>
</dbReference>
<dbReference type="InterPro" id="IPR020558">
    <property type="entry name" value="DiOHA_6PGluconate_deHydtase_CS"/>
</dbReference>
<dbReference type="InterPro" id="IPR056740">
    <property type="entry name" value="ILV_EDD_C"/>
</dbReference>
<dbReference type="InterPro" id="IPR000581">
    <property type="entry name" value="ILV_EDD_N"/>
</dbReference>
<dbReference type="InterPro" id="IPR037237">
    <property type="entry name" value="IlvD/EDD_N"/>
</dbReference>
<dbReference type="NCBIfam" id="TIGR00110">
    <property type="entry name" value="ilvD"/>
    <property type="match status" value="1"/>
</dbReference>
<dbReference type="NCBIfam" id="NF009103">
    <property type="entry name" value="PRK12448.1"/>
    <property type="match status" value="1"/>
</dbReference>
<dbReference type="PANTHER" id="PTHR43661">
    <property type="entry name" value="D-XYLONATE DEHYDRATASE"/>
    <property type="match status" value="1"/>
</dbReference>
<dbReference type="PANTHER" id="PTHR43661:SF3">
    <property type="entry name" value="D-XYLONATE DEHYDRATASE YAGF-RELATED"/>
    <property type="match status" value="1"/>
</dbReference>
<dbReference type="Pfam" id="PF24877">
    <property type="entry name" value="ILV_EDD_C"/>
    <property type="match status" value="1"/>
</dbReference>
<dbReference type="Pfam" id="PF00920">
    <property type="entry name" value="ILVD_EDD_N"/>
    <property type="match status" value="1"/>
</dbReference>
<dbReference type="SUPFAM" id="SSF143975">
    <property type="entry name" value="IlvD/EDD N-terminal domain-like"/>
    <property type="match status" value="1"/>
</dbReference>
<dbReference type="SUPFAM" id="SSF52016">
    <property type="entry name" value="LeuD/IlvD-like"/>
    <property type="match status" value="1"/>
</dbReference>
<dbReference type="PROSITE" id="PS00886">
    <property type="entry name" value="ILVD_EDD_1"/>
    <property type="match status" value="1"/>
</dbReference>
<dbReference type="PROSITE" id="PS00887">
    <property type="entry name" value="ILVD_EDD_2"/>
    <property type="match status" value="1"/>
</dbReference>
<accession>A5VN43</accession>
<proteinExistence type="inferred from homology"/>
<evidence type="ECO:0000255" key="1">
    <source>
        <dbReference type="HAMAP-Rule" id="MF_00012"/>
    </source>
</evidence>
<evidence type="ECO:0000305" key="2"/>